<keyword id="KW-0378">Hydrolase</keyword>
<keyword id="KW-0479">Metal-binding</keyword>
<keyword id="KW-1185">Reference proteome</keyword>
<sequence length="270" mass="29863">MISRRRFLQATAATIATSSGFGYMHYCEPGWFELIRHRLAFFKDNAAPFKILFLADLHYSRFVPLSLISDAIALGIEQKPDLILLGGDYVLFDMSLNFSAFSDVLSPLAECAPTFACFGNHDRPVGTEKNHLIGETLKSAGITVLFNQATVIATPNRQFELVGTGDLWAGQCKPPPASEANLPRLVLAHNPDSKEVMRDEPWDLMLCGHTHGGQLRVPLVGEPFAPVEDKRYVAGLNAFGERHIYTTRGVGSLYGLRLNCRPEVTMLELV</sequence>
<organism>
    <name type="scientific">Escherichia coli (strain K12)</name>
    <dbReference type="NCBI Taxonomy" id="83333"/>
    <lineage>
        <taxon>Bacteria</taxon>
        <taxon>Pseudomonadati</taxon>
        <taxon>Pseudomonadota</taxon>
        <taxon>Gammaproteobacteria</taxon>
        <taxon>Enterobacterales</taxon>
        <taxon>Enterobacteriaceae</taxon>
        <taxon>Escherichia</taxon>
    </lineage>
</organism>
<gene>
    <name type="primary">yaeI</name>
    <name type="ordered locus">b0164</name>
    <name type="ordered locus">JW5014</name>
</gene>
<accession>P37049</accession>
<accession>P75666</accession>
<accession>Q8KJP9</accession>
<reference key="1">
    <citation type="journal article" date="1994" name="Nucleic Acids Res.">
        <title>Systematic sequencing of the Escherichia coli genome: analysis of the 2.4-4.1 min (110,917-193,643 bp) region.</title>
        <authorList>
            <person name="Fujita N."/>
            <person name="Mori H."/>
            <person name="Yura T."/>
            <person name="Ishihama A."/>
        </authorList>
    </citation>
    <scope>NUCLEOTIDE SEQUENCE [LARGE SCALE GENOMIC DNA]</scope>
    <source>
        <strain>K12 / W3110 / ATCC 27325 / DSM 5911</strain>
    </source>
</reference>
<reference key="2">
    <citation type="submission" date="1997-01" db="EMBL/GenBank/DDBJ databases">
        <title>Sequence of minutes 4-25 of Escherichia coli.</title>
        <authorList>
            <person name="Chung E."/>
            <person name="Allen E."/>
            <person name="Araujo R."/>
            <person name="Aparicio A.M."/>
            <person name="Davis K."/>
            <person name="Duncan M."/>
            <person name="Federspiel N."/>
            <person name="Hyman R."/>
            <person name="Kalman S."/>
            <person name="Komp C."/>
            <person name="Kurdi O."/>
            <person name="Lew H."/>
            <person name="Lin D."/>
            <person name="Namath A."/>
            <person name="Oefner P."/>
            <person name="Roberts D."/>
            <person name="Schramm S."/>
            <person name="Davis R.W."/>
        </authorList>
    </citation>
    <scope>NUCLEOTIDE SEQUENCE [LARGE SCALE GENOMIC DNA]</scope>
    <source>
        <strain>K12 / MG1655 / ATCC 47076</strain>
    </source>
</reference>
<reference key="3">
    <citation type="journal article" date="1997" name="Science">
        <title>The complete genome sequence of Escherichia coli K-12.</title>
        <authorList>
            <person name="Blattner F.R."/>
            <person name="Plunkett G. III"/>
            <person name="Bloch C.A."/>
            <person name="Perna N.T."/>
            <person name="Burland V."/>
            <person name="Riley M."/>
            <person name="Collado-Vides J."/>
            <person name="Glasner J.D."/>
            <person name="Rode C.K."/>
            <person name="Mayhew G.F."/>
            <person name="Gregor J."/>
            <person name="Davis N.W."/>
            <person name="Kirkpatrick H.A."/>
            <person name="Goeden M.A."/>
            <person name="Rose D.J."/>
            <person name="Mau B."/>
            <person name="Shao Y."/>
        </authorList>
    </citation>
    <scope>NUCLEOTIDE SEQUENCE [LARGE SCALE GENOMIC DNA]</scope>
    <source>
        <strain>K12 / MG1655 / ATCC 47076</strain>
    </source>
</reference>
<reference key="4">
    <citation type="journal article" date="2006" name="Mol. Syst. Biol.">
        <title>Highly accurate genome sequences of Escherichia coli K-12 strains MG1655 and W3110.</title>
        <authorList>
            <person name="Hayashi K."/>
            <person name="Morooka N."/>
            <person name="Yamamoto Y."/>
            <person name="Fujita K."/>
            <person name="Isono K."/>
            <person name="Choi S."/>
            <person name="Ohtsubo E."/>
            <person name="Baba T."/>
            <person name="Wanner B.L."/>
            <person name="Mori H."/>
            <person name="Horiuchi T."/>
        </authorList>
    </citation>
    <scope>NUCLEOTIDE SEQUENCE [LARGE SCALE GENOMIC DNA]</scope>
    <source>
        <strain>K12 / W3110 / ATCC 27325 / DSM 5911</strain>
    </source>
</reference>
<reference key="5">
    <citation type="journal article" date="2005" name="FEMS Microbiol. Rev.">
        <title>Enzyme genomics: application of general enzymatic screens to discover new enzymes.</title>
        <authorList>
            <person name="Kuznetsova E."/>
            <person name="Proudfoot M."/>
            <person name="Sanders S.A."/>
            <person name="Reinking J."/>
            <person name="Savchenko A."/>
            <person name="Arrowsmith C.H."/>
            <person name="Edwards A.M."/>
            <person name="Yakunin A.F."/>
        </authorList>
    </citation>
    <scope>FUNCTION</scope>
</reference>
<name>YAEI_ECOLI</name>
<comment type="function">
    <text evidence="2">Shows phosphodiesterase activity, hydrolyzing phosphodiester bond in the artificial chromogenic substrate bis-p-nitrophenyl phosphate (bis-pNPP).</text>
</comment>
<comment type="cofactor">
    <cofactor evidence="1">
        <name>a divalent metal cation</name>
        <dbReference type="ChEBI" id="CHEBI:60240"/>
    </cofactor>
    <text evidence="1">Binds 2 divalent metal cations.</text>
</comment>
<comment type="similarity">
    <text evidence="3">Belongs to the metallophosphoesterase superfamily.</text>
</comment>
<evidence type="ECO:0000250" key="1"/>
<evidence type="ECO:0000269" key="2">
    <source>
    </source>
</evidence>
<evidence type="ECO:0000305" key="3"/>
<feature type="chain" id="PRO_0000172849" description="Phosphodiesterase YaeI">
    <location>
        <begin position="1"/>
        <end position="270"/>
    </location>
</feature>
<feature type="binding site" evidence="1">
    <location>
        <position position="56"/>
    </location>
    <ligand>
        <name>a divalent metal cation</name>
        <dbReference type="ChEBI" id="CHEBI:60240"/>
        <label>1</label>
    </ligand>
</feature>
<feature type="binding site" evidence="1">
    <location>
        <position position="58"/>
    </location>
    <ligand>
        <name>a divalent metal cation</name>
        <dbReference type="ChEBI" id="CHEBI:60240"/>
        <label>1</label>
    </ligand>
</feature>
<feature type="binding site" evidence="1">
    <location>
        <position position="88"/>
    </location>
    <ligand>
        <name>a divalent metal cation</name>
        <dbReference type="ChEBI" id="CHEBI:60240"/>
        <label>1</label>
    </ligand>
</feature>
<feature type="binding site" evidence="1">
    <location>
        <position position="88"/>
    </location>
    <ligand>
        <name>a divalent metal cation</name>
        <dbReference type="ChEBI" id="CHEBI:60240"/>
        <label>2</label>
    </ligand>
</feature>
<feature type="binding site" evidence="1">
    <location>
        <position position="120"/>
    </location>
    <ligand>
        <name>a divalent metal cation</name>
        <dbReference type="ChEBI" id="CHEBI:60240"/>
        <label>2</label>
    </ligand>
</feature>
<feature type="binding site" evidence="1">
    <location>
        <position position="209"/>
    </location>
    <ligand>
        <name>a divalent metal cation</name>
        <dbReference type="ChEBI" id="CHEBI:60240"/>
        <label>2</label>
    </ligand>
</feature>
<feature type="binding site" evidence="1">
    <location>
        <position position="211"/>
    </location>
    <ligand>
        <name>a divalent metal cation</name>
        <dbReference type="ChEBI" id="CHEBI:60240"/>
        <label>1</label>
    </ligand>
</feature>
<dbReference type="EC" id="3.1.4.-"/>
<dbReference type="EMBL" id="U70214">
    <property type="protein sequence ID" value="AAB08594.1"/>
    <property type="molecule type" value="Genomic_DNA"/>
</dbReference>
<dbReference type="EMBL" id="U00096">
    <property type="protein sequence ID" value="AAC73275.2"/>
    <property type="molecule type" value="Genomic_DNA"/>
</dbReference>
<dbReference type="EMBL" id="AP009048">
    <property type="protein sequence ID" value="BAB96741.2"/>
    <property type="molecule type" value="Genomic_DNA"/>
</dbReference>
<dbReference type="PIR" id="D64740">
    <property type="entry name" value="D64740"/>
</dbReference>
<dbReference type="RefSeq" id="NP_414706.2">
    <property type="nucleotide sequence ID" value="NC_000913.3"/>
</dbReference>
<dbReference type="RefSeq" id="WP_000625631.1">
    <property type="nucleotide sequence ID" value="NZ_SSZK01000004.1"/>
</dbReference>
<dbReference type="SMR" id="P37049"/>
<dbReference type="BioGRID" id="4260646">
    <property type="interactions" value="9"/>
</dbReference>
<dbReference type="FunCoup" id="P37049">
    <property type="interactions" value="190"/>
</dbReference>
<dbReference type="STRING" id="511145.b0164"/>
<dbReference type="PaxDb" id="511145-b0164"/>
<dbReference type="EnsemblBacteria" id="AAC73275">
    <property type="protein sequence ID" value="AAC73275"/>
    <property type="gene ID" value="b0164"/>
</dbReference>
<dbReference type="GeneID" id="945002"/>
<dbReference type="KEGG" id="ecj:JW5014"/>
<dbReference type="KEGG" id="eco:b0164"/>
<dbReference type="KEGG" id="ecoc:C3026_00750"/>
<dbReference type="PATRIC" id="fig|511145.12.peg.170"/>
<dbReference type="EchoBASE" id="EB2241"/>
<dbReference type="eggNOG" id="COG1408">
    <property type="taxonomic scope" value="Bacteria"/>
</dbReference>
<dbReference type="HOGENOM" id="CLU_025443_3_2_6"/>
<dbReference type="InParanoid" id="P37049"/>
<dbReference type="OMA" id="THGGQCK"/>
<dbReference type="OrthoDB" id="9780884at2"/>
<dbReference type="PhylomeDB" id="P37049"/>
<dbReference type="BioCyc" id="EcoCyc:EG12337-MONOMER"/>
<dbReference type="BRENDA" id="3.1.4.1">
    <property type="organism ID" value="2026"/>
</dbReference>
<dbReference type="PRO" id="PR:P37049"/>
<dbReference type="Proteomes" id="UP000000625">
    <property type="component" value="Chromosome"/>
</dbReference>
<dbReference type="GO" id="GO:0016020">
    <property type="term" value="C:membrane"/>
    <property type="evidence" value="ECO:0007669"/>
    <property type="project" value="GOC"/>
</dbReference>
<dbReference type="GO" id="GO:0046872">
    <property type="term" value="F:metal ion binding"/>
    <property type="evidence" value="ECO:0007669"/>
    <property type="project" value="UniProtKB-KW"/>
</dbReference>
<dbReference type="GO" id="GO:0008081">
    <property type="term" value="F:phosphoric diester hydrolase activity"/>
    <property type="evidence" value="ECO:0000314"/>
    <property type="project" value="EcoCyc"/>
</dbReference>
<dbReference type="GO" id="GO:0008758">
    <property type="term" value="F:UDP-2,3-diacylglucosamine hydrolase activity"/>
    <property type="evidence" value="ECO:0000318"/>
    <property type="project" value="GO_Central"/>
</dbReference>
<dbReference type="GO" id="GO:0009245">
    <property type="term" value="P:lipid A biosynthetic process"/>
    <property type="evidence" value="ECO:0000318"/>
    <property type="project" value="GO_Central"/>
</dbReference>
<dbReference type="Gene3D" id="3.60.21.10">
    <property type="match status" value="1"/>
</dbReference>
<dbReference type="InterPro" id="IPR004843">
    <property type="entry name" value="Calcineurin-like_PHP_ApaH"/>
</dbReference>
<dbReference type="InterPro" id="IPR029052">
    <property type="entry name" value="Metallo-depent_PP-like"/>
</dbReference>
<dbReference type="InterPro" id="IPR051158">
    <property type="entry name" value="Metallophosphoesterase_sf"/>
</dbReference>
<dbReference type="NCBIfam" id="NF008460">
    <property type="entry name" value="PRK11340.1"/>
    <property type="match status" value="1"/>
</dbReference>
<dbReference type="PANTHER" id="PTHR31302:SF31">
    <property type="entry name" value="PHOSPHODIESTERASE YAEI"/>
    <property type="match status" value="1"/>
</dbReference>
<dbReference type="PANTHER" id="PTHR31302">
    <property type="entry name" value="TRANSMEMBRANE PROTEIN WITH METALLOPHOSPHOESTERASE DOMAIN-RELATED"/>
    <property type="match status" value="1"/>
</dbReference>
<dbReference type="Pfam" id="PF00149">
    <property type="entry name" value="Metallophos"/>
    <property type="match status" value="1"/>
</dbReference>
<dbReference type="SUPFAM" id="SSF56300">
    <property type="entry name" value="Metallo-dependent phosphatases"/>
    <property type="match status" value="1"/>
</dbReference>
<proteinExistence type="inferred from homology"/>
<protein>
    <recommendedName>
        <fullName>Phosphodiesterase YaeI</fullName>
        <ecNumber>3.1.4.-</ecNumber>
    </recommendedName>
</protein>